<dbReference type="EC" id="5.3.1.26" evidence="1"/>
<dbReference type="EMBL" id="CP000261">
    <property type="protein sequence ID" value="ABF36714.1"/>
    <property type="molecule type" value="Genomic_DNA"/>
</dbReference>
<dbReference type="SMR" id="Q1J9U7"/>
<dbReference type="KEGG" id="spj:MGAS2096_Spy1662"/>
<dbReference type="HOGENOM" id="CLU_091396_2_0_9"/>
<dbReference type="UniPathway" id="UPA00702">
    <property type="reaction ID" value="UER00714"/>
</dbReference>
<dbReference type="GO" id="GO:0050044">
    <property type="term" value="F:galactose-6-phosphate isomerase activity"/>
    <property type="evidence" value="ECO:0007669"/>
    <property type="project" value="UniProtKB-UniRule"/>
</dbReference>
<dbReference type="GO" id="GO:0004751">
    <property type="term" value="F:ribose-5-phosphate isomerase activity"/>
    <property type="evidence" value="ECO:0007669"/>
    <property type="project" value="TreeGrafter"/>
</dbReference>
<dbReference type="GO" id="GO:0019316">
    <property type="term" value="P:D-allose catabolic process"/>
    <property type="evidence" value="ECO:0007669"/>
    <property type="project" value="TreeGrafter"/>
</dbReference>
<dbReference type="GO" id="GO:0019388">
    <property type="term" value="P:galactose catabolic process"/>
    <property type="evidence" value="ECO:0007669"/>
    <property type="project" value="UniProtKB-UniPathway"/>
</dbReference>
<dbReference type="GO" id="GO:0019512">
    <property type="term" value="P:lactose catabolic process via tagatose-6-phosphate"/>
    <property type="evidence" value="ECO:0007669"/>
    <property type="project" value="UniProtKB-UniRule"/>
</dbReference>
<dbReference type="GO" id="GO:0009052">
    <property type="term" value="P:pentose-phosphate shunt, non-oxidative branch"/>
    <property type="evidence" value="ECO:0007669"/>
    <property type="project" value="TreeGrafter"/>
</dbReference>
<dbReference type="Gene3D" id="3.40.1400.10">
    <property type="entry name" value="Sugar-phosphate isomerase, RpiB/LacA/LacB"/>
    <property type="match status" value="1"/>
</dbReference>
<dbReference type="HAMAP" id="MF_01556">
    <property type="entry name" value="LacB"/>
    <property type="match status" value="1"/>
</dbReference>
<dbReference type="InterPro" id="IPR004784">
    <property type="entry name" value="LacB"/>
</dbReference>
<dbReference type="InterPro" id="IPR003500">
    <property type="entry name" value="RpiB_LacA_LacB"/>
</dbReference>
<dbReference type="InterPro" id="IPR036569">
    <property type="entry name" value="RpiB_LacA_LacB_sf"/>
</dbReference>
<dbReference type="NCBIfam" id="NF004051">
    <property type="entry name" value="PRK05571.1"/>
    <property type="match status" value="1"/>
</dbReference>
<dbReference type="NCBIfam" id="NF006381">
    <property type="entry name" value="PRK08622.1"/>
    <property type="match status" value="1"/>
</dbReference>
<dbReference type="NCBIfam" id="TIGR00689">
    <property type="entry name" value="rpiB_lacA_lacB"/>
    <property type="match status" value="1"/>
</dbReference>
<dbReference type="PANTHER" id="PTHR30345:SF0">
    <property type="entry name" value="DNA DAMAGE-REPAIR_TOLERATION PROTEIN DRT102"/>
    <property type="match status" value="1"/>
</dbReference>
<dbReference type="PANTHER" id="PTHR30345">
    <property type="entry name" value="RIBOSE-5-PHOSPHATE ISOMERASE B"/>
    <property type="match status" value="1"/>
</dbReference>
<dbReference type="Pfam" id="PF02502">
    <property type="entry name" value="LacAB_rpiB"/>
    <property type="match status" value="1"/>
</dbReference>
<dbReference type="PIRSF" id="PIRSF005384">
    <property type="entry name" value="RpiB_LacA_B"/>
    <property type="match status" value="1"/>
</dbReference>
<dbReference type="SUPFAM" id="SSF89623">
    <property type="entry name" value="Ribose/Galactose isomerase RpiB/AlsB"/>
    <property type="match status" value="1"/>
</dbReference>
<organism>
    <name type="scientific">Streptococcus pyogenes serotype M12 (strain MGAS2096)</name>
    <dbReference type="NCBI Taxonomy" id="370553"/>
    <lineage>
        <taxon>Bacteria</taxon>
        <taxon>Bacillati</taxon>
        <taxon>Bacillota</taxon>
        <taxon>Bacilli</taxon>
        <taxon>Lactobacillales</taxon>
        <taxon>Streptococcaceae</taxon>
        <taxon>Streptococcus</taxon>
    </lineage>
</organism>
<feature type="chain" id="PRO_1000068929" description="Galactose-6-phosphate isomerase subunit LacB">
    <location>
        <begin position="1"/>
        <end position="171"/>
    </location>
</feature>
<keyword id="KW-0413">Isomerase</keyword>
<keyword id="KW-0423">Lactose metabolism</keyword>
<reference key="1">
    <citation type="journal article" date="2006" name="Proc. Natl. Acad. Sci. U.S.A.">
        <title>Molecular genetic anatomy of inter- and intraserotype variation in the human bacterial pathogen group A Streptococcus.</title>
        <authorList>
            <person name="Beres S.B."/>
            <person name="Richter E.W."/>
            <person name="Nagiec M.J."/>
            <person name="Sumby P."/>
            <person name="Porcella S.F."/>
            <person name="DeLeo F.R."/>
            <person name="Musser J.M."/>
        </authorList>
    </citation>
    <scope>NUCLEOTIDE SEQUENCE [LARGE SCALE GENOMIC DNA]</scope>
    <source>
        <strain>MGAS2096</strain>
    </source>
</reference>
<proteinExistence type="inferred from homology"/>
<sequence length="171" mass="18893">MKIAVGCDHIVTYEKIAVVDYLKSQGHKVIDCGTYDNVRTHYPIFGKKVGEAVASGEAELGVVICGTGVGITNAVNKVPGIRSALVRDMTSAIYSKEELNANVIGFGGKIIGGLLMNDIIDAFLAAEYKPTEENKKWIEKMDSLQHASQDQNNPHFFDEFLEKWDRGEYHD</sequence>
<protein>
    <recommendedName>
        <fullName evidence="1">Galactose-6-phosphate isomerase subunit LacB</fullName>
        <ecNumber evidence="1">5.3.1.26</ecNumber>
    </recommendedName>
</protein>
<comment type="catalytic activity">
    <reaction evidence="1">
        <text>aldehydo-D-galactose 6-phosphate = keto-D-tagatose 6-phosphate</text>
        <dbReference type="Rhea" id="RHEA:13033"/>
        <dbReference type="ChEBI" id="CHEBI:58255"/>
        <dbReference type="ChEBI" id="CHEBI:134283"/>
        <dbReference type="EC" id="5.3.1.26"/>
    </reaction>
</comment>
<comment type="pathway">
    <text evidence="1">Carbohydrate metabolism; D-galactose 6-phosphate degradation; D-tagatose 6-phosphate from D-galactose 6-phosphate: step 1/1.</text>
</comment>
<comment type="subunit">
    <text evidence="1">Heteromultimeric protein consisting of LacA and LacB.</text>
</comment>
<comment type="similarity">
    <text evidence="1">Belongs to the LacAB/RpiB family.</text>
</comment>
<accession>Q1J9U7</accession>
<gene>
    <name evidence="1" type="primary">lacB</name>
    <name type="ordered locus">MGAS2096_Spy1662</name>
</gene>
<name>LACB_STRPB</name>
<evidence type="ECO:0000255" key="1">
    <source>
        <dbReference type="HAMAP-Rule" id="MF_01556"/>
    </source>
</evidence>